<accession>Q09002</accession>
<proteinExistence type="evidence at transcript level"/>
<protein>
    <recommendedName>
        <fullName>Stathmin-2-B</fullName>
    </recommendedName>
    <alternativeName>
        <fullName>SCG10 protein homolog B</fullName>
    </alternativeName>
</protein>
<organism>
    <name type="scientific">Xenopus laevis</name>
    <name type="common">African clawed frog</name>
    <dbReference type="NCBI Taxonomy" id="8355"/>
    <lineage>
        <taxon>Eukaryota</taxon>
        <taxon>Metazoa</taxon>
        <taxon>Chordata</taxon>
        <taxon>Craniata</taxon>
        <taxon>Vertebrata</taxon>
        <taxon>Euteleostomi</taxon>
        <taxon>Amphibia</taxon>
        <taxon>Batrachia</taxon>
        <taxon>Anura</taxon>
        <taxon>Pipoidea</taxon>
        <taxon>Pipidae</taxon>
        <taxon>Xenopodinae</taxon>
        <taxon>Xenopus</taxon>
        <taxon>Xenopus</taxon>
    </lineage>
</organism>
<dbReference type="EMBL" id="X71434">
    <property type="protein sequence ID" value="CAA50565.1"/>
    <property type="molecule type" value="mRNA"/>
</dbReference>
<dbReference type="PIR" id="I51643">
    <property type="entry name" value="I51643"/>
</dbReference>
<dbReference type="SMR" id="Q09002"/>
<dbReference type="AGR" id="Xenbase:XB-GENE-6254239"/>
<dbReference type="Xenbase" id="XB-GENE-6254239">
    <property type="gene designation" value="stmn2.S"/>
</dbReference>
<dbReference type="Proteomes" id="UP000186698">
    <property type="component" value="Unplaced"/>
</dbReference>
<dbReference type="GO" id="GO:0005737">
    <property type="term" value="C:cytoplasm"/>
    <property type="evidence" value="ECO:0000250"/>
    <property type="project" value="UniProtKB"/>
</dbReference>
<dbReference type="GO" id="GO:0030426">
    <property type="term" value="C:growth cone"/>
    <property type="evidence" value="ECO:0000250"/>
    <property type="project" value="UniProtKB"/>
</dbReference>
<dbReference type="GO" id="GO:0030027">
    <property type="term" value="C:lamellipodium"/>
    <property type="evidence" value="ECO:0000250"/>
    <property type="project" value="UniProtKB"/>
</dbReference>
<dbReference type="GO" id="GO:0016020">
    <property type="term" value="C:membrane"/>
    <property type="evidence" value="ECO:0007669"/>
    <property type="project" value="UniProtKB-SubCell"/>
</dbReference>
<dbReference type="GO" id="GO:0043005">
    <property type="term" value="C:neuron projection"/>
    <property type="evidence" value="ECO:0000250"/>
    <property type="project" value="UniProtKB"/>
</dbReference>
<dbReference type="GO" id="GO:0043025">
    <property type="term" value="C:neuronal cell body"/>
    <property type="evidence" value="ECO:0000250"/>
    <property type="project" value="UniProtKB"/>
</dbReference>
<dbReference type="GO" id="GO:0015631">
    <property type="term" value="F:tubulin binding"/>
    <property type="evidence" value="ECO:0000318"/>
    <property type="project" value="GO_Central"/>
</dbReference>
<dbReference type="GO" id="GO:1990090">
    <property type="term" value="P:cellular response to nerve growth factor stimulus"/>
    <property type="evidence" value="ECO:0000250"/>
    <property type="project" value="UniProtKB"/>
</dbReference>
<dbReference type="GO" id="GO:0007019">
    <property type="term" value="P:microtubule depolymerization"/>
    <property type="evidence" value="ECO:0000318"/>
    <property type="project" value="GO_Central"/>
</dbReference>
<dbReference type="GO" id="GO:0031115">
    <property type="term" value="P:negative regulation of microtubule polymerization"/>
    <property type="evidence" value="ECO:0000250"/>
    <property type="project" value="UniProtKB"/>
</dbReference>
<dbReference type="GO" id="GO:0031175">
    <property type="term" value="P:neuron projection development"/>
    <property type="evidence" value="ECO:0000318"/>
    <property type="project" value="GO_Central"/>
</dbReference>
<dbReference type="GO" id="GO:0010976">
    <property type="term" value="P:positive regulation of neuron projection development"/>
    <property type="evidence" value="ECO:0000250"/>
    <property type="project" value="UniProtKB"/>
</dbReference>
<dbReference type="GO" id="GO:0031110">
    <property type="term" value="P:regulation of microtubule polymerization or depolymerization"/>
    <property type="evidence" value="ECO:0000318"/>
    <property type="project" value="GO_Central"/>
</dbReference>
<dbReference type="Gene3D" id="6.10.280.30">
    <property type="match status" value="1"/>
</dbReference>
<dbReference type="InterPro" id="IPR030514">
    <property type="entry name" value="Stathmin_CS"/>
</dbReference>
<dbReference type="InterPro" id="IPR000956">
    <property type="entry name" value="Stathmin_fam"/>
</dbReference>
<dbReference type="InterPro" id="IPR036002">
    <property type="entry name" value="Stathmin_sf"/>
</dbReference>
<dbReference type="PANTHER" id="PTHR10104">
    <property type="entry name" value="STATHMIN"/>
    <property type="match status" value="1"/>
</dbReference>
<dbReference type="PANTHER" id="PTHR10104:SF18">
    <property type="entry name" value="STATHMIN-2"/>
    <property type="match status" value="1"/>
</dbReference>
<dbReference type="Pfam" id="PF00836">
    <property type="entry name" value="Stathmin"/>
    <property type="match status" value="1"/>
</dbReference>
<dbReference type="PIRSF" id="PIRSF002285">
    <property type="entry name" value="Stathmin"/>
    <property type="match status" value="1"/>
</dbReference>
<dbReference type="PRINTS" id="PR00345">
    <property type="entry name" value="STATHMIN"/>
</dbReference>
<dbReference type="SUPFAM" id="SSF101494">
    <property type="entry name" value="Stathmin"/>
    <property type="match status" value="1"/>
</dbReference>
<dbReference type="PROSITE" id="PS00563">
    <property type="entry name" value="STATHMIN_1"/>
    <property type="match status" value="1"/>
</dbReference>
<dbReference type="PROSITE" id="PS01041">
    <property type="entry name" value="STATHMIN_2"/>
    <property type="match status" value="1"/>
</dbReference>
<dbReference type="PROSITE" id="PS51663">
    <property type="entry name" value="STATHMIN_3"/>
    <property type="match status" value="1"/>
</dbReference>
<name>STM2B_XENLA</name>
<evidence type="ECO:0000250" key="1"/>
<evidence type="ECO:0000255" key="2"/>
<evidence type="ECO:0000255" key="3">
    <source>
        <dbReference type="PROSITE-ProRule" id="PRU00998"/>
    </source>
</evidence>
<evidence type="ECO:0000305" key="4"/>
<keyword id="KW-0966">Cell projection</keyword>
<keyword id="KW-0175">Coiled coil</keyword>
<keyword id="KW-0963">Cytoplasm</keyword>
<keyword id="KW-0472">Membrane</keyword>
<keyword id="KW-0597">Phosphoprotein</keyword>
<keyword id="KW-1185">Reference proteome</keyword>
<reference key="1">
    <citation type="journal article" date="1993" name="J. Biol. Chem.">
        <title>Stathmin gene family: phylogenetic conservation and developmental regulation in Xenopus.</title>
        <authorList>
            <person name="Maucuer A."/>
            <person name="Moreau J."/>
            <person name="Mechali M."/>
            <person name="Sobel A."/>
        </authorList>
    </citation>
    <scope>NUCLEOTIDE SEQUENCE [MRNA]</scope>
    <source>
        <tissue>Brain</tissue>
    </source>
</reference>
<feature type="chain" id="PRO_0000182401" description="Stathmin-2-B">
    <location>
        <begin position="1"/>
        <end position="178"/>
    </location>
</feature>
<feature type="domain" description="SLD" evidence="3">
    <location>
        <begin position="38"/>
        <end position="178"/>
    </location>
</feature>
<feature type="coiled-coil region" evidence="2">
    <location>
        <begin position="75"/>
        <end position="178"/>
    </location>
</feature>
<comment type="subcellular location">
    <subcellularLocation>
        <location evidence="1">Cytoplasm</location>
    </subcellularLocation>
    <subcellularLocation>
        <location evidence="1">Membrane</location>
        <topology evidence="1">Peripheral membrane protein</topology>
        <orientation evidence="1">Cytoplasmic side</orientation>
    </subcellularLocation>
    <subcellularLocation>
        <location evidence="1">Cell projection</location>
        <location evidence="1">Lamellipodium</location>
    </subcellularLocation>
</comment>
<comment type="tissue specificity">
    <text>Nervous tissue.</text>
</comment>
<comment type="similarity">
    <text evidence="4">Belongs to the stathmin family.</text>
</comment>
<sequence length="178" mass="20714">MAKTAIAYKEKMKELSMLSLICSCFYPEPRNIAAYTFDDMEVKQLNKRASGQAFELILKPPSPVSEAPRTLASPKRKDVSLEEIQAKLEAAEERRKSQEAQILKQLAEKREHEREVLQKALEENNNFSRMAEEKLVLKMEQIKENREYYLASLMERLKEKERHAADVRKNKEQLELSG</sequence>
<gene>
    <name type="primary">stmn2-b</name>
</gene>